<keyword id="KW-0963">Cytoplasm</keyword>
<keyword id="KW-0489">Methyltransferase</keyword>
<keyword id="KW-1185">Reference proteome</keyword>
<keyword id="KW-0949">S-adenosyl-L-methionine</keyword>
<keyword id="KW-0808">Transferase</keyword>
<organism>
    <name type="scientific">Chaetomium thermophilum (strain DSM 1495 / CBS 144.50 / IMI 039719)</name>
    <name type="common">Thermochaetoides thermophila</name>
    <dbReference type="NCBI Taxonomy" id="759272"/>
    <lineage>
        <taxon>Eukaryota</taxon>
        <taxon>Fungi</taxon>
        <taxon>Dikarya</taxon>
        <taxon>Ascomycota</taxon>
        <taxon>Pezizomycotina</taxon>
        <taxon>Sordariomycetes</taxon>
        <taxon>Sordariomycetidae</taxon>
        <taxon>Sordariales</taxon>
        <taxon>Chaetomiaceae</taxon>
        <taxon>Thermochaetoides</taxon>
    </lineage>
</organism>
<evidence type="ECO:0000250" key="1">
    <source>
        <dbReference type="UniProtKB" id="P47163"/>
    </source>
</evidence>
<evidence type="ECO:0000250" key="2">
    <source>
        <dbReference type="UniProtKB" id="Q9H867"/>
    </source>
</evidence>
<evidence type="ECO:0000305" key="3"/>
<sequence>MVASRNPQTARFCWQYLQLEQSLDFPDGELLRDEAVQETIYQQLFAPNAPTPLPPARYRLRVLKELTSRIESAIEDWETHGISDNLMDAMAELVAQPLPSEAEAAQERCYVTYYLSLLEGGLEKPHITLLESRSLISASGTTGLRTWEAALHLGQFLSVNSGLVKDKRVLELGTGTGYLAVLCAKYLGTSHVIASDGSEEVVEKLSDNLFVNGLQDSDKVQPMELKWGHALLGTEEEHWNGGRKIDVVLGADITYDVSVIPALIATLEELVDLYPGISIIIAATERNRETYETFLAACGRRGFSVTPESFPVPSRAEQKGPFYKDGTPIHICQLRR</sequence>
<protein>
    <recommendedName>
        <fullName evidence="1">Protein-lysine N-methyltransferase EFM3</fullName>
        <ecNumber evidence="1">2.1.1.-</ecNumber>
    </recommendedName>
    <alternativeName>
        <fullName evidence="1">Elongation factor methyltransferase 3</fullName>
    </alternativeName>
</protein>
<accession>P0CU27</accession>
<accession>G0SAE3</accession>
<gene>
    <name type="ORF">CTHT_0041970.1</name>
</gene>
<feature type="chain" id="PRO_0000437792" description="Protein-lysine N-methyltransferase EFM3">
    <location>
        <begin position="1"/>
        <end position="336"/>
    </location>
</feature>
<feature type="binding site" evidence="2">
    <location>
        <position position="147"/>
    </location>
    <ligand>
        <name>S-adenosyl-L-methionine</name>
        <dbReference type="ChEBI" id="CHEBI:59789"/>
    </ligand>
</feature>
<feature type="binding site" evidence="2">
    <location>
        <begin position="173"/>
        <end position="175"/>
    </location>
    <ligand>
        <name>S-adenosyl-L-methionine</name>
        <dbReference type="ChEBI" id="CHEBI:59789"/>
    </ligand>
</feature>
<feature type="binding site" evidence="2">
    <location>
        <position position="196"/>
    </location>
    <ligand>
        <name>S-adenosyl-L-methionine</name>
        <dbReference type="ChEBI" id="CHEBI:59789"/>
    </ligand>
</feature>
<feature type="binding site" evidence="2">
    <location>
        <position position="232"/>
    </location>
    <ligand>
        <name>S-adenosyl-L-methionine</name>
        <dbReference type="ChEBI" id="CHEBI:59789"/>
    </ligand>
</feature>
<feature type="binding site" evidence="2">
    <location>
        <position position="251"/>
    </location>
    <ligand>
        <name>S-adenosyl-L-methionine</name>
        <dbReference type="ChEBI" id="CHEBI:59789"/>
    </ligand>
</feature>
<comment type="function">
    <text evidence="1">S-adenosyl-L-methionine-dependent protein-lysine N-methyltransferase that methylates elongation factor 2.</text>
</comment>
<comment type="subcellular location">
    <subcellularLocation>
        <location evidence="1">Cytoplasm</location>
    </subcellularLocation>
</comment>
<comment type="similarity">
    <text evidence="3">Belongs to the class I-like SAM-binding methyltransferase superfamily. EEF2KMT family.</text>
</comment>
<comment type="sequence caution" evidence="3">
    <conflict type="erroneous gene model prediction">
        <sequence resource="EMBL-CDS" id="EGS19715"/>
    </conflict>
    <text>The predicted gene CTHT_0041970 has been split into 2 genes: CTHT_0041970.1 and CTHT_0041970.2.</text>
</comment>
<dbReference type="EC" id="2.1.1.-" evidence="1"/>
<dbReference type="EMBL" id="GL988043">
    <property type="protein sequence ID" value="EGS19715.1"/>
    <property type="status" value="ALT_SEQ"/>
    <property type="molecule type" value="Genomic_DNA"/>
</dbReference>
<dbReference type="SMR" id="P0CU27"/>
<dbReference type="STRING" id="759272.P0CU27"/>
<dbReference type="eggNOG" id="KOG2497">
    <property type="taxonomic scope" value="Eukaryota"/>
</dbReference>
<dbReference type="eggNOG" id="KOG3424">
    <property type="taxonomic scope" value="Eukaryota"/>
</dbReference>
<dbReference type="Proteomes" id="UP000008066">
    <property type="component" value="Unassembled WGS sequence"/>
</dbReference>
<dbReference type="GO" id="GO:0005737">
    <property type="term" value="C:cytoplasm"/>
    <property type="evidence" value="ECO:0007669"/>
    <property type="project" value="UniProtKB-SubCell"/>
</dbReference>
<dbReference type="GO" id="GO:0008757">
    <property type="term" value="F:S-adenosylmethionine-dependent methyltransferase activity"/>
    <property type="evidence" value="ECO:0007669"/>
    <property type="project" value="UniProtKB-ARBA"/>
</dbReference>
<dbReference type="GO" id="GO:0032259">
    <property type="term" value="P:methylation"/>
    <property type="evidence" value="ECO:0007669"/>
    <property type="project" value="UniProtKB-KW"/>
</dbReference>
<dbReference type="CDD" id="cd02440">
    <property type="entry name" value="AdoMet_MTases"/>
    <property type="match status" value="1"/>
</dbReference>
<dbReference type="Gene3D" id="3.40.50.150">
    <property type="entry name" value="Vaccinia Virus protein VP39"/>
    <property type="match status" value="1"/>
</dbReference>
<dbReference type="InterPro" id="IPR019410">
    <property type="entry name" value="Methyltransf_16"/>
</dbReference>
<dbReference type="InterPro" id="IPR029063">
    <property type="entry name" value="SAM-dependent_MTases_sf"/>
</dbReference>
<dbReference type="PANTHER" id="PTHR14614">
    <property type="entry name" value="HEPATOCELLULAR CARCINOMA-ASSOCIATED ANTIGEN"/>
    <property type="match status" value="1"/>
</dbReference>
<dbReference type="PANTHER" id="PTHR14614:SF130">
    <property type="entry name" value="PROTEIN-LYSINE N-METHYLTRANSFERASE EEF2KMT"/>
    <property type="match status" value="1"/>
</dbReference>
<dbReference type="Pfam" id="PF10294">
    <property type="entry name" value="Methyltransf_16"/>
    <property type="match status" value="1"/>
</dbReference>
<dbReference type="SUPFAM" id="SSF53335">
    <property type="entry name" value="S-adenosyl-L-methionine-dependent methyltransferases"/>
    <property type="match status" value="1"/>
</dbReference>
<proteinExistence type="inferred from homology"/>
<name>EFM3_CHATD</name>
<reference key="1">
    <citation type="journal article" date="2011" name="Cell">
        <title>Insight into structure and assembly of the nuclear pore complex by utilizing the genome of a eukaryotic thermophile.</title>
        <authorList>
            <person name="Amlacher S."/>
            <person name="Sarges P."/>
            <person name="Flemming D."/>
            <person name="van Noort V."/>
            <person name="Kunze R."/>
            <person name="Devos D.P."/>
            <person name="Arumugam M."/>
            <person name="Bork P."/>
            <person name="Hurt E."/>
        </authorList>
    </citation>
    <scope>NUCLEOTIDE SEQUENCE [LARGE SCALE GENOMIC DNA]</scope>
    <source>
        <strain>DSM 1495 / CBS 144.50 / IMI 039719</strain>
    </source>
</reference>